<name>NANA_SALTI</name>
<keyword id="KW-0119">Carbohydrate metabolism</keyword>
<keyword id="KW-0963">Cytoplasm</keyword>
<keyword id="KW-0456">Lyase</keyword>
<keyword id="KW-0704">Schiff base</keyword>
<dbReference type="EC" id="4.1.3.3" evidence="1"/>
<dbReference type="EMBL" id="AL513382">
    <property type="protein sequence ID" value="CAD07856.1"/>
    <property type="molecule type" value="Genomic_DNA"/>
</dbReference>
<dbReference type="EMBL" id="AE014613">
    <property type="protein sequence ID" value="AAO70791.1"/>
    <property type="molecule type" value="Genomic_DNA"/>
</dbReference>
<dbReference type="RefSeq" id="NP_457717.1">
    <property type="nucleotide sequence ID" value="NC_003198.1"/>
</dbReference>
<dbReference type="RefSeq" id="WP_001029662.1">
    <property type="nucleotide sequence ID" value="NZ_WSUR01000003.1"/>
</dbReference>
<dbReference type="SMR" id="Q8Z3F0"/>
<dbReference type="STRING" id="220341.gene:17587369"/>
<dbReference type="KEGG" id="stt:t3256"/>
<dbReference type="KEGG" id="sty:STY3520"/>
<dbReference type="PATRIC" id="fig|220341.7.peg.3583"/>
<dbReference type="eggNOG" id="COG0329">
    <property type="taxonomic scope" value="Bacteria"/>
</dbReference>
<dbReference type="HOGENOM" id="CLU_049343_6_0_6"/>
<dbReference type="OMA" id="YWNAISA"/>
<dbReference type="OrthoDB" id="199953at2"/>
<dbReference type="UniPathway" id="UPA00629">
    <property type="reaction ID" value="UER00680"/>
</dbReference>
<dbReference type="Proteomes" id="UP000000541">
    <property type="component" value="Chromosome"/>
</dbReference>
<dbReference type="Proteomes" id="UP000002670">
    <property type="component" value="Chromosome"/>
</dbReference>
<dbReference type="GO" id="GO:0005829">
    <property type="term" value="C:cytosol"/>
    <property type="evidence" value="ECO:0007669"/>
    <property type="project" value="TreeGrafter"/>
</dbReference>
<dbReference type="GO" id="GO:0008747">
    <property type="term" value="F:N-acetylneuraminate lyase activity"/>
    <property type="evidence" value="ECO:0007669"/>
    <property type="project" value="UniProtKB-UniRule"/>
</dbReference>
<dbReference type="GO" id="GO:0005975">
    <property type="term" value="P:carbohydrate metabolic process"/>
    <property type="evidence" value="ECO:0007669"/>
    <property type="project" value="UniProtKB-UniRule"/>
</dbReference>
<dbReference type="GO" id="GO:0019262">
    <property type="term" value="P:N-acetylneuraminate catabolic process"/>
    <property type="evidence" value="ECO:0007669"/>
    <property type="project" value="UniProtKB-UniRule"/>
</dbReference>
<dbReference type="CDD" id="cd00954">
    <property type="entry name" value="NAL"/>
    <property type="match status" value="1"/>
</dbReference>
<dbReference type="FunFam" id="3.20.20.70:FF:000039">
    <property type="entry name" value="N-acetylneuraminate lyase"/>
    <property type="match status" value="1"/>
</dbReference>
<dbReference type="Gene3D" id="3.20.20.70">
    <property type="entry name" value="Aldolase class I"/>
    <property type="match status" value="1"/>
</dbReference>
<dbReference type="HAMAP" id="MF_01237">
    <property type="entry name" value="N_acetylneuram_lyase"/>
    <property type="match status" value="1"/>
</dbReference>
<dbReference type="InterPro" id="IPR013785">
    <property type="entry name" value="Aldolase_TIM"/>
</dbReference>
<dbReference type="InterPro" id="IPR002220">
    <property type="entry name" value="DapA-like"/>
</dbReference>
<dbReference type="InterPro" id="IPR005264">
    <property type="entry name" value="NanA"/>
</dbReference>
<dbReference type="InterPro" id="IPR020625">
    <property type="entry name" value="Schiff_base-form_aldolases_AS"/>
</dbReference>
<dbReference type="InterPro" id="IPR020624">
    <property type="entry name" value="Schiff_base-form_aldolases_CS"/>
</dbReference>
<dbReference type="NCBIfam" id="TIGR00683">
    <property type="entry name" value="nanA"/>
    <property type="match status" value="1"/>
</dbReference>
<dbReference type="NCBIfam" id="NF003164">
    <property type="entry name" value="PRK04147.1"/>
    <property type="match status" value="1"/>
</dbReference>
<dbReference type="PANTHER" id="PTHR42849">
    <property type="entry name" value="N-ACETYLNEURAMINATE LYASE"/>
    <property type="match status" value="1"/>
</dbReference>
<dbReference type="PANTHER" id="PTHR42849:SF1">
    <property type="entry name" value="N-ACETYLNEURAMINATE LYASE"/>
    <property type="match status" value="1"/>
</dbReference>
<dbReference type="Pfam" id="PF00701">
    <property type="entry name" value="DHDPS"/>
    <property type="match status" value="1"/>
</dbReference>
<dbReference type="PIRSF" id="PIRSF001365">
    <property type="entry name" value="DHDPS"/>
    <property type="match status" value="1"/>
</dbReference>
<dbReference type="PRINTS" id="PR00146">
    <property type="entry name" value="DHPICSNTHASE"/>
</dbReference>
<dbReference type="SMART" id="SM01130">
    <property type="entry name" value="DHDPS"/>
    <property type="match status" value="1"/>
</dbReference>
<dbReference type="SUPFAM" id="SSF51569">
    <property type="entry name" value="Aldolase"/>
    <property type="match status" value="1"/>
</dbReference>
<dbReference type="PROSITE" id="PS00665">
    <property type="entry name" value="DHDPS_1"/>
    <property type="match status" value="1"/>
</dbReference>
<dbReference type="PROSITE" id="PS00666">
    <property type="entry name" value="DHDPS_2"/>
    <property type="match status" value="1"/>
</dbReference>
<evidence type="ECO:0000255" key="1">
    <source>
        <dbReference type="HAMAP-Rule" id="MF_01237"/>
    </source>
</evidence>
<proteinExistence type="inferred from homology"/>
<feature type="chain" id="PRO_0000103218" description="N-acetylneuraminate lyase">
    <location>
        <begin position="1"/>
        <end position="297"/>
    </location>
</feature>
<feature type="active site" description="Proton donor" evidence="1">
    <location>
        <position position="137"/>
    </location>
</feature>
<feature type="active site" description="Schiff-base intermediate with substrate" evidence="1">
    <location>
        <position position="165"/>
    </location>
</feature>
<feature type="binding site" evidence="1">
    <location>
        <position position="47"/>
    </location>
    <ligand>
        <name>aceneuramate</name>
        <dbReference type="ChEBI" id="CHEBI:173083"/>
    </ligand>
</feature>
<feature type="binding site" evidence="1">
    <location>
        <position position="48"/>
    </location>
    <ligand>
        <name>aceneuramate</name>
        <dbReference type="ChEBI" id="CHEBI:173083"/>
    </ligand>
</feature>
<feature type="binding site" evidence="1">
    <location>
        <position position="167"/>
    </location>
    <ligand>
        <name>aceneuramate</name>
        <dbReference type="ChEBI" id="CHEBI:173083"/>
    </ligand>
</feature>
<feature type="binding site" evidence="1">
    <location>
        <position position="189"/>
    </location>
    <ligand>
        <name>aceneuramate</name>
        <dbReference type="ChEBI" id="CHEBI:173083"/>
    </ligand>
</feature>
<feature type="binding site" evidence="1">
    <location>
        <position position="191"/>
    </location>
    <ligand>
        <name>aceneuramate</name>
        <dbReference type="ChEBI" id="CHEBI:173083"/>
    </ligand>
</feature>
<feature type="binding site" evidence="1">
    <location>
        <position position="192"/>
    </location>
    <ligand>
        <name>aceneuramate</name>
        <dbReference type="ChEBI" id="CHEBI:173083"/>
    </ligand>
</feature>
<feature type="binding site" evidence="1">
    <location>
        <position position="208"/>
    </location>
    <ligand>
        <name>aceneuramate</name>
        <dbReference type="ChEBI" id="CHEBI:173083"/>
    </ligand>
</feature>
<reference key="1">
    <citation type="journal article" date="2001" name="Nature">
        <title>Complete genome sequence of a multiple drug resistant Salmonella enterica serovar Typhi CT18.</title>
        <authorList>
            <person name="Parkhill J."/>
            <person name="Dougan G."/>
            <person name="James K.D."/>
            <person name="Thomson N.R."/>
            <person name="Pickard D."/>
            <person name="Wain J."/>
            <person name="Churcher C.M."/>
            <person name="Mungall K.L."/>
            <person name="Bentley S.D."/>
            <person name="Holden M.T.G."/>
            <person name="Sebaihia M."/>
            <person name="Baker S."/>
            <person name="Basham D."/>
            <person name="Brooks K."/>
            <person name="Chillingworth T."/>
            <person name="Connerton P."/>
            <person name="Cronin A."/>
            <person name="Davis P."/>
            <person name="Davies R.M."/>
            <person name="Dowd L."/>
            <person name="White N."/>
            <person name="Farrar J."/>
            <person name="Feltwell T."/>
            <person name="Hamlin N."/>
            <person name="Haque A."/>
            <person name="Hien T.T."/>
            <person name="Holroyd S."/>
            <person name="Jagels K."/>
            <person name="Krogh A."/>
            <person name="Larsen T.S."/>
            <person name="Leather S."/>
            <person name="Moule S."/>
            <person name="O'Gaora P."/>
            <person name="Parry C."/>
            <person name="Quail M.A."/>
            <person name="Rutherford K.M."/>
            <person name="Simmonds M."/>
            <person name="Skelton J."/>
            <person name="Stevens K."/>
            <person name="Whitehead S."/>
            <person name="Barrell B.G."/>
        </authorList>
    </citation>
    <scope>NUCLEOTIDE SEQUENCE [LARGE SCALE GENOMIC DNA]</scope>
    <source>
        <strain>CT18</strain>
    </source>
</reference>
<reference key="2">
    <citation type="journal article" date="2003" name="J. Bacteriol.">
        <title>Comparative genomics of Salmonella enterica serovar Typhi strains Ty2 and CT18.</title>
        <authorList>
            <person name="Deng W."/>
            <person name="Liou S.-R."/>
            <person name="Plunkett G. III"/>
            <person name="Mayhew G.F."/>
            <person name="Rose D.J."/>
            <person name="Burland V."/>
            <person name="Kodoyianni V."/>
            <person name="Schwartz D.C."/>
            <person name="Blattner F.R."/>
        </authorList>
    </citation>
    <scope>NUCLEOTIDE SEQUENCE [LARGE SCALE GENOMIC DNA]</scope>
    <source>
        <strain>ATCC 700931 / Ty2</strain>
    </source>
</reference>
<sequence length="297" mass="32482">MAKALQGVMAALLTPFDHQQQLDSESLRRLVRFNIGQGIDGLYVGGSTGEAFVQSLAEREQVLEIVAEEAKGKITLIAHVGTVSTAESQQLASAAKRYGFDAVSAVTPFYYPFSFEEHCDHYRAIIDSADGLPMVVYNIPALSGVKLTLDQINTLVTLPGVNALKQTSGDLFQMEQIRRAHPDLVLYNGYDEIFASGLLAGADGGIGSTYNIMGWRYQGIVQALREGDVAKAQRLQTECNKVIDLLIKTGVFRGLKTVLHYMDVVSVPLCRKPFAPVDEKYLPALKALAQQLMEEKA</sequence>
<gene>
    <name evidence="1" type="primary">nanA</name>
    <name type="ordered locus">STY3520</name>
    <name type="ordered locus">t3256</name>
</gene>
<accession>Q8Z3F0</accession>
<comment type="function">
    <text evidence="1">Catalyzes the reversible aldol cleavage of N-acetylneuraminic acid (sialic acid; Neu5Ac) to form pyruvate and N-acetylmannosamine (ManNAc) via a Schiff base intermediate.</text>
</comment>
<comment type="catalytic activity">
    <reaction evidence="1">
        <text>aceneuramate = aldehydo-N-acetyl-D-mannosamine + pyruvate</text>
        <dbReference type="Rhea" id="RHEA:23296"/>
        <dbReference type="ChEBI" id="CHEBI:15361"/>
        <dbReference type="ChEBI" id="CHEBI:17122"/>
        <dbReference type="ChEBI" id="CHEBI:173083"/>
        <dbReference type="EC" id="4.1.3.3"/>
    </reaction>
</comment>
<comment type="pathway">
    <text evidence="1">Amino-sugar metabolism; N-acetylneuraminate degradation; D-fructose 6-phosphate from N-acetylneuraminate: step 1/5.</text>
</comment>
<comment type="subunit">
    <text evidence="1">Homotetramer.</text>
</comment>
<comment type="subcellular location">
    <subcellularLocation>
        <location evidence="1">Cytoplasm</location>
    </subcellularLocation>
</comment>
<comment type="similarity">
    <text evidence="1">Belongs to the DapA family. NanA subfamily.</text>
</comment>
<organism>
    <name type="scientific">Salmonella typhi</name>
    <dbReference type="NCBI Taxonomy" id="90370"/>
    <lineage>
        <taxon>Bacteria</taxon>
        <taxon>Pseudomonadati</taxon>
        <taxon>Pseudomonadota</taxon>
        <taxon>Gammaproteobacteria</taxon>
        <taxon>Enterobacterales</taxon>
        <taxon>Enterobacteriaceae</taxon>
        <taxon>Salmonella</taxon>
    </lineage>
</organism>
<protein>
    <recommendedName>
        <fullName evidence="1">N-acetylneuraminate lyase</fullName>
        <shortName evidence="1">NAL</shortName>
        <shortName evidence="1">Neu5Ac lyase</shortName>
        <ecNumber evidence="1">4.1.3.3</ecNumber>
    </recommendedName>
    <alternativeName>
        <fullName evidence="1">N-acetylneuraminate pyruvate-lyase</fullName>
    </alternativeName>
    <alternativeName>
        <fullName evidence="1">N-acetylneuraminic acid aldolase</fullName>
    </alternativeName>
    <alternativeName>
        <fullName evidence="1">Sialate lyase</fullName>
    </alternativeName>
    <alternativeName>
        <fullName evidence="1">Sialic acid aldolase</fullName>
    </alternativeName>
    <alternativeName>
        <fullName evidence="1">Sialic acid lyase</fullName>
    </alternativeName>
</protein>